<organism>
    <name type="scientific">Caulobacter vibrioides (strain NA1000 / CB15N)</name>
    <name type="common">Caulobacter crescentus</name>
    <dbReference type="NCBI Taxonomy" id="565050"/>
    <lineage>
        <taxon>Bacteria</taxon>
        <taxon>Pseudomonadati</taxon>
        <taxon>Pseudomonadota</taxon>
        <taxon>Alphaproteobacteria</taxon>
        <taxon>Caulobacterales</taxon>
        <taxon>Caulobacteraceae</taxon>
        <taxon>Caulobacter</taxon>
    </lineage>
</organism>
<name>Y142_CAUVN</name>
<gene>
    <name type="ordered locus">CCNA_00142</name>
</gene>
<reference key="1">
    <citation type="journal article" date="2010" name="J. Bacteriol.">
        <title>The genetic basis of laboratory adaptation in Caulobacter crescentus.</title>
        <authorList>
            <person name="Marks M.E."/>
            <person name="Castro-Rojas C.M."/>
            <person name="Teiling C."/>
            <person name="Du L."/>
            <person name="Kapatral V."/>
            <person name="Walunas T.L."/>
            <person name="Crosson S."/>
        </authorList>
    </citation>
    <scope>NUCLEOTIDE SEQUENCE [LARGE SCALE GENOMIC DNA]</scope>
    <source>
        <strain>NA1000 / CB15N</strain>
    </source>
</reference>
<comment type="similarity">
    <text evidence="1">Belongs to the UPF0102 family.</text>
</comment>
<keyword id="KW-1185">Reference proteome</keyword>
<protein>
    <recommendedName>
        <fullName evidence="1">UPF0102 protein CCNA_00142</fullName>
    </recommendedName>
</protein>
<proteinExistence type="inferred from homology"/>
<dbReference type="EMBL" id="CP001340">
    <property type="protein sequence ID" value="ACL93609.1"/>
    <property type="molecule type" value="Genomic_DNA"/>
</dbReference>
<dbReference type="RefSeq" id="WP_010918032.1">
    <property type="nucleotide sequence ID" value="NC_011916.1"/>
</dbReference>
<dbReference type="RefSeq" id="YP_002515517.1">
    <property type="nucleotide sequence ID" value="NC_011916.1"/>
</dbReference>
<dbReference type="SMR" id="B8GXN3"/>
<dbReference type="GeneID" id="7332396"/>
<dbReference type="KEGG" id="ccs:CCNA_00142"/>
<dbReference type="PATRIC" id="fig|565050.3.peg.141"/>
<dbReference type="HOGENOM" id="CLU_115353_0_2_5"/>
<dbReference type="OrthoDB" id="9812968at2"/>
<dbReference type="PhylomeDB" id="B8GXN3"/>
<dbReference type="Proteomes" id="UP000001364">
    <property type="component" value="Chromosome"/>
</dbReference>
<dbReference type="GO" id="GO:0003676">
    <property type="term" value="F:nucleic acid binding"/>
    <property type="evidence" value="ECO:0007669"/>
    <property type="project" value="InterPro"/>
</dbReference>
<dbReference type="Gene3D" id="3.40.1350.10">
    <property type="match status" value="1"/>
</dbReference>
<dbReference type="HAMAP" id="MF_00048">
    <property type="entry name" value="UPF0102"/>
    <property type="match status" value="1"/>
</dbReference>
<dbReference type="InterPro" id="IPR011335">
    <property type="entry name" value="Restrct_endonuc-II-like"/>
</dbReference>
<dbReference type="InterPro" id="IPR011856">
    <property type="entry name" value="tRNA_endonuc-like_dom_sf"/>
</dbReference>
<dbReference type="InterPro" id="IPR003509">
    <property type="entry name" value="UPF0102_YraN-like"/>
</dbReference>
<dbReference type="NCBIfam" id="NF009151">
    <property type="entry name" value="PRK12497.1-5"/>
    <property type="match status" value="1"/>
</dbReference>
<dbReference type="PANTHER" id="PTHR34039">
    <property type="entry name" value="UPF0102 PROTEIN YRAN"/>
    <property type="match status" value="1"/>
</dbReference>
<dbReference type="PANTHER" id="PTHR34039:SF1">
    <property type="entry name" value="UPF0102 PROTEIN YRAN"/>
    <property type="match status" value="1"/>
</dbReference>
<dbReference type="Pfam" id="PF02021">
    <property type="entry name" value="UPF0102"/>
    <property type="match status" value="1"/>
</dbReference>
<dbReference type="SUPFAM" id="SSF52980">
    <property type="entry name" value="Restriction endonuclease-like"/>
    <property type="match status" value="1"/>
</dbReference>
<feature type="chain" id="PRO_1000200130" description="UPF0102 protein CCNA_00142">
    <location>
        <begin position="1"/>
        <end position="125"/>
    </location>
</feature>
<evidence type="ECO:0000255" key="1">
    <source>
        <dbReference type="HAMAP-Rule" id="MF_00048"/>
    </source>
</evidence>
<accession>B8GXN3</accession>
<sequence>MAAGVRQSRGTAARKVGRRAEVIAALWLMAKGYRILGFRLATPLGEIDLLAQRGKVLAVVEVKQRTTIEDALDAVKPTQRERLRRAATHLAAHRAGLRDLLVRLDLIAMAPGRPPRHLPDAWGGA</sequence>